<proteinExistence type="inferred from homology"/>
<accession>B5XT60</accession>
<organism>
    <name type="scientific">Klebsiella pneumoniae (strain 342)</name>
    <dbReference type="NCBI Taxonomy" id="507522"/>
    <lineage>
        <taxon>Bacteria</taxon>
        <taxon>Pseudomonadati</taxon>
        <taxon>Pseudomonadota</taxon>
        <taxon>Gammaproteobacteria</taxon>
        <taxon>Enterobacterales</taxon>
        <taxon>Enterobacteriaceae</taxon>
        <taxon>Klebsiella/Raoultella group</taxon>
        <taxon>Klebsiella</taxon>
        <taxon>Klebsiella pneumoniae complex</taxon>
    </lineage>
</organism>
<feature type="chain" id="PRO_1000189088" description="Small heat shock protein IbpA">
    <location>
        <begin position="1"/>
        <end position="137"/>
    </location>
</feature>
<feature type="domain" description="sHSP" evidence="2">
    <location>
        <begin position="28"/>
        <end position="137"/>
    </location>
</feature>
<dbReference type="EMBL" id="CP000964">
    <property type="protein sequence ID" value="ACI09975.1"/>
    <property type="molecule type" value="Genomic_DNA"/>
</dbReference>
<dbReference type="SMR" id="B5XT60"/>
<dbReference type="KEGG" id="kpe:KPK_0010"/>
<dbReference type="HOGENOM" id="CLU_046737_4_2_6"/>
<dbReference type="Proteomes" id="UP000001734">
    <property type="component" value="Chromosome"/>
</dbReference>
<dbReference type="GO" id="GO:0005737">
    <property type="term" value="C:cytoplasm"/>
    <property type="evidence" value="ECO:0007669"/>
    <property type="project" value="UniProtKB-SubCell"/>
</dbReference>
<dbReference type="GO" id="GO:0050821">
    <property type="term" value="P:protein stabilization"/>
    <property type="evidence" value="ECO:0007669"/>
    <property type="project" value="UniProtKB-UniRule"/>
</dbReference>
<dbReference type="CDD" id="cd06470">
    <property type="entry name" value="ACD_IbpA-B_like"/>
    <property type="match status" value="1"/>
</dbReference>
<dbReference type="FunFam" id="2.60.40.790:FF:000002">
    <property type="entry name" value="Small heat shock protein IbpA"/>
    <property type="match status" value="1"/>
</dbReference>
<dbReference type="Gene3D" id="2.60.40.790">
    <property type="match status" value="1"/>
</dbReference>
<dbReference type="HAMAP" id="MF_02000">
    <property type="entry name" value="HSP20_IbpA"/>
    <property type="match status" value="1"/>
</dbReference>
<dbReference type="InterPro" id="IPR002068">
    <property type="entry name" value="A-crystallin/Hsp20_dom"/>
</dbReference>
<dbReference type="InterPro" id="IPR037913">
    <property type="entry name" value="ACD_IbpA/B"/>
</dbReference>
<dbReference type="InterPro" id="IPR008978">
    <property type="entry name" value="HSP20-like_chaperone"/>
</dbReference>
<dbReference type="InterPro" id="IPR023728">
    <property type="entry name" value="HSP20_IbpA"/>
</dbReference>
<dbReference type="NCBIfam" id="NF008013">
    <property type="entry name" value="PRK10743.1"/>
    <property type="match status" value="1"/>
</dbReference>
<dbReference type="PANTHER" id="PTHR47062">
    <property type="match status" value="1"/>
</dbReference>
<dbReference type="PANTHER" id="PTHR47062:SF1">
    <property type="entry name" value="SMALL HEAT SHOCK PROTEIN IBPA"/>
    <property type="match status" value="1"/>
</dbReference>
<dbReference type="Pfam" id="PF00011">
    <property type="entry name" value="HSP20"/>
    <property type="match status" value="1"/>
</dbReference>
<dbReference type="SUPFAM" id="SSF49764">
    <property type="entry name" value="HSP20-like chaperones"/>
    <property type="match status" value="1"/>
</dbReference>
<dbReference type="PROSITE" id="PS01031">
    <property type="entry name" value="SHSP"/>
    <property type="match status" value="1"/>
</dbReference>
<gene>
    <name evidence="1" type="primary">ibpA</name>
    <name type="ordered locus">KPK_0010</name>
</gene>
<evidence type="ECO:0000255" key="1">
    <source>
        <dbReference type="HAMAP-Rule" id="MF_02000"/>
    </source>
</evidence>
<evidence type="ECO:0000255" key="2">
    <source>
        <dbReference type="PROSITE-ProRule" id="PRU00285"/>
    </source>
</evidence>
<keyword id="KW-0143">Chaperone</keyword>
<keyword id="KW-0963">Cytoplasm</keyword>
<keyword id="KW-0346">Stress response</keyword>
<comment type="function">
    <text evidence="1">Associates with aggregated proteins, together with IbpB, to stabilize and protect them from irreversible denaturation and extensive proteolysis during heat shock and oxidative stress. Aggregated proteins bound to the IbpAB complex are more efficiently refolded and reactivated by the ATP-dependent chaperone systems ClpB and DnaK/DnaJ/GrpE. Its activity is ATP-independent.</text>
</comment>
<comment type="subunit">
    <text evidence="1">Monomer. Forms homomultimers of about 100-150 subunits at optimal growth temperatures. Conformation changes to monomers at high temperatures or high ionic concentrations.</text>
</comment>
<comment type="subcellular location">
    <subcellularLocation>
        <location evidence="1">Cytoplasm</location>
    </subcellularLocation>
</comment>
<comment type="similarity">
    <text evidence="1 2">Belongs to the small heat shock protein (HSP20) family.</text>
</comment>
<sequence>MRNFDLSPLYRSAIGFDRLFNLLENNQSQSNGGYPPYNVELVDENHYRIAIAVAGFAESELEITAQDNLLIVKGAHAAEQKERTYLYQGIAERNFERKFQLAENIHVRGANLVNGLLYIDLERVIPEANKPRRIEIN</sequence>
<reference key="1">
    <citation type="journal article" date="2008" name="PLoS Genet.">
        <title>Complete genome sequence of the N2-fixing broad host range endophyte Klebsiella pneumoniae 342 and virulence predictions verified in mice.</title>
        <authorList>
            <person name="Fouts D.E."/>
            <person name="Tyler H.L."/>
            <person name="DeBoy R.T."/>
            <person name="Daugherty S."/>
            <person name="Ren Q."/>
            <person name="Badger J.H."/>
            <person name="Durkin A.S."/>
            <person name="Huot H."/>
            <person name="Shrivastava S."/>
            <person name="Kothari S."/>
            <person name="Dodson R.J."/>
            <person name="Mohamoud Y."/>
            <person name="Khouri H."/>
            <person name="Roesch L.F.W."/>
            <person name="Krogfelt K.A."/>
            <person name="Struve C."/>
            <person name="Triplett E.W."/>
            <person name="Methe B.A."/>
        </authorList>
    </citation>
    <scope>NUCLEOTIDE SEQUENCE [LARGE SCALE GENOMIC DNA]</scope>
    <source>
        <strain>342</strain>
    </source>
</reference>
<protein>
    <recommendedName>
        <fullName evidence="1">Small heat shock protein IbpA</fullName>
    </recommendedName>
    <alternativeName>
        <fullName evidence="1">16 kDa heat shock protein A</fullName>
    </alternativeName>
</protein>
<name>IBPA_KLEP3</name>